<comment type="function">
    <text evidence="3 4 5">Component of the monopolin complex which promotes monoorientation during meiosis I, required for chromosome segregation during meiosis. Involved in rDNA silencing.</text>
</comment>
<comment type="subunit">
    <text evidence="5">Component of the monopolin complex composed of at least CSM1, LRS4 and MAM1. The complex associates with the kinetochore.</text>
</comment>
<comment type="interaction">
    <interactant intactId="EBI-32189">
        <id>Q04087</id>
    </interactant>
    <interactant intactId="EBI-4440">
        <id>P32562</id>
        <label>CDC5</label>
    </interactant>
    <organismsDiffer>false</organismsDiffer>
    <experiments>6</experiments>
</comment>
<comment type="interaction">
    <interactant intactId="EBI-32189">
        <id>Q04087</id>
    </interactant>
    <interactant intactId="EBI-4451">
        <id>P06243</id>
        <label>CDC7</label>
    </interactant>
    <organismsDiffer>false</organismsDiffer>
    <experiments>5</experiments>
</comment>
<comment type="interaction">
    <interactant intactId="EBI-32189">
        <id>Q04087</id>
    </interactant>
    <interactant intactId="EBI-22001">
        <id>P25651</id>
        <label>CSM1</label>
    </interactant>
    <organismsDiffer>false</organismsDiffer>
    <experiments>16</experiments>
</comment>
<comment type="subcellular location">
    <subcellularLocation>
        <location>Nucleus</location>
        <location>Nucleolus</location>
    </subcellularLocation>
    <subcellularLocation>
        <location>Chromosome</location>
        <location>Centromere</location>
    </subcellularLocation>
    <text>Transiently released from the nucleolus and localized to the centromere regions during late pachytene. This relocation is CDC5 dependent.</text>
</comment>
<comment type="PTM">
    <text evidence="7">Phosphorylated by CDC5. This phosphorylation is required for the location to the kinetochores during late pachytene.</text>
</comment>
<comment type="miscellaneous">
    <text evidence="6">Present with 1390 molecules/cell in log phase SD medium.</text>
</comment>
<evidence type="ECO:0000255" key="1"/>
<evidence type="ECO:0000256" key="2">
    <source>
        <dbReference type="SAM" id="MobiDB-lite"/>
    </source>
</evidence>
<evidence type="ECO:0000269" key="3">
    <source>
    </source>
</evidence>
<evidence type="ECO:0000269" key="4">
    <source>
    </source>
</evidence>
<evidence type="ECO:0000269" key="5">
    <source>
    </source>
</evidence>
<evidence type="ECO:0000269" key="6">
    <source>
    </source>
</evidence>
<evidence type="ECO:0000269" key="7">
    <source>
    </source>
</evidence>
<evidence type="ECO:0007744" key="8">
    <source>
    </source>
</evidence>
<evidence type="ECO:0007744" key="9">
    <source>
    </source>
</evidence>
<accession>Q04087</accession>
<accession>D6VT66</accession>
<gene>
    <name type="primary">LRS4</name>
    <name type="ordered locus">YDR439W</name>
    <name type="ORF">D9461.25</name>
</gene>
<reference key="1">
    <citation type="journal article" date="1997" name="Nature">
        <title>The nucleotide sequence of Saccharomyces cerevisiae chromosome IV.</title>
        <authorList>
            <person name="Jacq C."/>
            <person name="Alt-Moerbe J."/>
            <person name="Andre B."/>
            <person name="Arnold W."/>
            <person name="Bahr A."/>
            <person name="Ballesta J.P.G."/>
            <person name="Bargues M."/>
            <person name="Baron L."/>
            <person name="Becker A."/>
            <person name="Biteau N."/>
            <person name="Bloecker H."/>
            <person name="Blugeon C."/>
            <person name="Boskovic J."/>
            <person name="Brandt P."/>
            <person name="Brueckner M."/>
            <person name="Buitrago M.J."/>
            <person name="Coster F."/>
            <person name="Delaveau T."/>
            <person name="del Rey F."/>
            <person name="Dujon B."/>
            <person name="Eide L.G."/>
            <person name="Garcia-Cantalejo J.M."/>
            <person name="Goffeau A."/>
            <person name="Gomez-Peris A."/>
            <person name="Granotier C."/>
            <person name="Hanemann V."/>
            <person name="Hankeln T."/>
            <person name="Hoheisel J.D."/>
            <person name="Jaeger W."/>
            <person name="Jimenez A."/>
            <person name="Jonniaux J.-L."/>
            <person name="Kraemer C."/>
            <person name="Kuester H."/>
            <person name="Laamanen P."/>
            <person name="Legros Y."/>
            <person name="Louis E.J."/>
            <person name="Moeller-Rieker S."/>
            <person name="Monnet A."/>
            <person name="Moro M."/>
            <person name="Mueller-Auer S."/>
            <person name="Nussbaumer B."/>
            <person name="Paricio N."/>
            <person name="Paulin L."/>
            <person name="Perea J."/>
            <person name="Perez-Alonso M."/>
            <person name="Perez-Ortin J.E."/>
            <person name="Pohl T.M."/>
            <person name="Prydz H."/>
            <person name="Purnelle B."/>
            <person name="Rasmussen S.W."/>
            <person name="Remacha M.A."/>
            <person name="Revuelta J.L."/>
            <person name="Rieger M."/>
            <person name="Salom D."/>
            <person name="Saluz H.P."/>
            <person name="Saiz J.E."/>
            <person name="Saren A.-M."/>
            <person name="Schaefer M."/>
            <person name="Scharfe M."/>
            <person name="Schmidt E.R."/>
            <person name="Schneider C."/>
            <person name="Scholler P."/>
            <person name="Schwarz S."/>
            <person name="Soler-Mira A."/>
            <person name="Urrestarazu L.A."/>
            <person name="Verhasselt P."/>
            <person name="Vissers S."/>
            <person name="Voet M."/>
            <person name="Volckaert G."/>
            <person name="Wagner G."/>
            <person name="Wambutt R."/>
            <person name="Wedler E."/>
            <person name="Wedler H."/>
            <person name="Woelfl S."/>
            <person name="Harris D.E."/>
            <person name="Bowman S."/>
            <person name="Brown D."/>
            <person name="Churcher C.M."/>
            <person name="Connor R."/>
            <person name="Dedman K."/>
            <person name="Gentles S."/>
            <person name="Hamlin N."/>
            <person name="Hunt S."/>
            <person name="Jones L."/>
            <person name="McDonald S."/>
            <person name="Murphy L.D."/>
            <person name="Niblett D."/>
            <person name="Odell C."/>
            <person name="Oliver K."/>
            <person name="Rajandream M.A."/>
            <person name="Richards C."/>
            <person name="Shore L."/>
            <person name="Walsh S.V."/>
            <person name="Barrell B.G."/>
            <person name="Dietrich F.S."/>
            <person name="Mulligan J.T."/>
            <person name="Allen E."/>
            <person name="Araujo R."/>
            <person name="Aviles E."/>
            <person name="Berno A."/>
            <person name="Carpenter J."/>
            <person name="Chen E."/>
            <person name="Cherry J.M."/>
            <person name="Chung E."/>
            <person name="Duncan M."/>
            <person name="Hunicke-Smith S."/>
            <person name="Hyman R.W."/>
            <person name="Komp C."/>
            <person name="Lashkari D."/>
            <person name="Lew H."/>
            <person name="Lin D."/>
            <person name="Mosedale D."/>
            <person name="Nakahara K."/>
            <person name="Namath A."/>
            <person name="Oefner P."/>
            <person name="Oh C."/>
            <person name="Petel F.X."/>
            <person name="Roberts D."/>
            <person name="Schramm S."/>
            <person name="Schroeder M."/>
            <person name="Shogren T."/>
            <person name="Shroff N."/>
            <person name="Winant A."/>
            <person name="Yelton M.A."/>
            <person name="Botstein D."/>
            <person name="Davis R.W."/>
            <person name="Johnston M."/>
            <person name="Andrews S."/>
            <person name="Brinkman R."/>
            <person name="Cooper J."/>
            <person name="Ding H."/>
            <person name="Du Z."/>
            <person name="Favello A."/>
            <person name="Fulton L."/>
            <person name="Gattung S."/>
            <person name="Greco T."/>
            <person name="Hallsworth K."/>
            <person name="Hawkins J."/>
            <person name="Hillier L.W."/>
            <person name="Jier M."/>
            <person name="Johnson D."/>
            <person name="Johnston L."/>
            <person name="Kirsten J."/>
            <person name="Kucaba T."/>
            <person name="Langston Y."/>
            <person name="Latreille P."/>
            <person name="Le T."/>
            <person name="Mardis E."/>
            <person name="Menezes S."/>
            <person name="Miller N."/>
            <person name="Nhan M."/>
            <person name="Pauley A."/>
            <person name="Peluso D."/>
            <person name="Rifkin L."/>
            <person name="Riles L."/>
            <person name="Taich A."/>
            <person name="Trevaskis E."/>
            <person name="Vignati D."/>
            <person name="Wilcox L."/>
            <person name="Wohldman P."/>
            <person name="Vaudin M."/>
            <person name="Wilson R."/>
            <person name="Waterston R."/>
            <person name="Albermann K."/>
            <person name="Hani J."/>
            <person name="Heumann K."/>
            <person name="Kleine K."/>
            <person name="Mewes H.-W."/>
            <person name="Zollner A."/>
            <person name="Zaccaria P."/>
        </authorList>
    </citation>
    <scope>NUCLEOTIDE SEQUENCE [LARGE SCALE GENOMIC DNA]</scope>
    <source>
        <strain>ATCC 204508 / S288c</strain>
    </source>
</reference>
<reference key="2">
    <citation type="journal article" date="2014" name="G3 (Bethesda)">
        <title>The reference genome sequence of Saccharomyces cerevisiae: Then and now.</title>
        <authorList>
            <person name="Engel S.R."/>
            <person name="Dietrich F.S."/>
            <person name="Fisk D.G."/>
            <person name="Binkley G."/>
            <person name="Balakrishnan R."/>
            <person name="Costanzo M.C."/>
            <person name="Dwight S.S."/>
            <person name="Hitz B.C."/>
            <person name="Karra K."/>
            <person name="Nash R.S."/>
            <person name="Weng S."/>
            <person name="Wong E.D."/>
            <person name="Lloyd P."/>
            <person name="Skrzypek M.S."/>
            <person name="Miyasato S.R."/>
            <person name="Simison M."/>
            <person name="Cherry J.M."/>
        </authorList>
    </citation>
    <scope>GENOME REANNOTATION</scope>
    <source>
        <strain>ATCC 204508 / S288c</strain>
    </source>
</reference>
<reference key="3">
    <citation type="journal article" date="1999" name="Mol. Cell. Biol.">
        <title>A genetic screen for ribosomal DNA silencing defects identifies multiple DNA replication and chromatin-modulating factors.</title>
        <authorList>
            <person name="Smith J.S."/>
            <person name="Caputo E."/>
            <person name="Boeke J.D."/>
        </authorList>
    </citation>
    <scope>FUNCTION</scope>
</reference>
<reference key="4">
    <citation type="journal article" date="2003" name="Dev. Cell">
        <title>Kinetochore recruitment of two nucleolar proteins is required for homolog segregation in meiosis I.</title>
        <authorList>
            <person name="Rabitsch K.P."/>
            <person name="Petronczki M."/>
            <person name="Javerzat J.-P."/>
            <person name="Genier S."/>
            <person name="Chwalla B."/>
            <person name="Schleiffer A."/>
            <person name="Tanaka T.U."/>
            <person name="Nasmyth K."/>
        </authorList>
    </citation>
    <scope>FUNCTION</scope>
    <scope>SUBCELLULAR LOCATION</scope>
    <scope>IDENTIFICATION IN THE MONOPOLIN COMPLEX</scope>
</reference>
<reference key="5">
    <citation type="journal article" date="2003" name="Genetics">
        <title>Large-scale functional genomic analysis of sporulation and meiosis in Saccharomyces cerevisiae.</title>
        <authorList>
            <person name="Enyenihi A.H."/>
            <person name="Saunders W.S."/>
        </authorList>
    </citation>
    <scope>FUNCTION</scope>
</reference>
<reference key="6">
    <citation type="journal article" date="2003" name="Nature">
        <title>Global analysis of protein localization in budding yeast.</title>
        <authorList>
            <person name="Huh W.-K."/>
            <person name="Falvo J.V."/>
            <person name="Gerke L.C."/>
            <person name="Carroll A.S."/>
            <person name="Howson R.W."/>
            <person name="Weissman J.S."/>
            <person name="O'Shea E.K."/>
        </authorList>
    </citation>
    <scope>SUBCELLULAR LOCATION [LARGE SCALE ANALYSIS]</scope>
</reference>
<reference key="7">
    <citation type="journal article" date="2003" name="Nature">
        <title>Global analysis of protein expression in yeast.</title>
        <authorList>
            <person name="Ghaemmaghami S."/>
            <person name="Huh W.-K."/>
            <person name="Bower K."/>
            <person name="Howson R.W."/>
            <person name="Belle A."/>
            <person name="Dephoure N."/>
            <person name="O'Shea E.K."/>
            <person name="Weissman J.S."/>
        </authorList>
    </citation>
    <scope>LEVEL OF PROTEIN EXPRESSION [LARGE SCALE ANALYSIS]</scope>
</reference>
<reference key="8">
    <citation type="journal article" date="2003" name="Nat. Cell Biol.">
        <title>Polo-like kinase Cdc5 promotes chiasmata formation and cosegregation of sister centromeres at meiosis I.</title>
        <authorList>
            <person name="Clyne R.K."/>
            <person name="Katis V.L."/>
            <person name="Jessop L."/>
            <person name="Benjamin K.R."/>
            <person name="Herskowitz I."/>
            <person name="Lichten M."/>
            <person name="Nasmyth K."/>
        </authorList>
    </citation>
    <scope>SUBCELLULAR LOCATION</scope>
</reference>
<reference key="9">
    <citation type="journal article" date="2004" name="Curr. Biol.">
        <title>Spo13 maintains centromeric cohesion and kinetochore coorientation during meiosis I.</title>
        <authorList>
            <person name="Lee B.H."/>
            <person name="Kiburz B.M."/>
            <person name="Amon A."/>
        </authorList>
    </citation>
    <scope>SUBCELLULAR LOCATION</scope>
    <scope>ASSOCIATION TO THE KINETOCHORE</scope>
</reference>
<reference key="10">
    <citation type="journal article" date="2004" name="Curr. Biol.">
        <title>Spo13 facilitates monopolin recruitment to kinetochores and regulates maintenance of centromeric cohesion during yeast meiosis.</title>
        <authorList>
            <person name="Katis V.L."/>
            <person name="Matos J."/>
            <person name="Mori S."/>
            <person name="Shirahige K."/>
            <person name="Zachariae W."/>
            <person name="Nasmyth K."/>
        </authorList>
    </citation>
    <scope>PHOSPHORYLATION</scope>
</reference>
<reference key="11">
    <citation type="journal article" date="2008" name="Mol. Cell. Proteomics">
        <title>A multidimensional chromatography technology for in-depth phosphoproteome analysis.</title>
        <authorList>
            <person name="Albuquerque C.P."/>
            <person name="Smolka M.B."/>
            <person name="Payne S.H."/>
            <person name="Bafna V."/>
            <person name="Eng J."/>
            <person name="Zhou H."/>
        </authorList>
    </citation>
    <scope>PHOSPHORYLATION [LARGE SCALE ANALYSIS] AT SER-168</scope>
    <scope>IDENTIFICATION BY MASS SPECTROMETRY [LARGE SCALE ANALYSIS]</scope>
</reference>
<reference key="12">
    <citation type="journal article" date="2009" name="Science">
        <title>Global analysis of Cdk1 substrate phosphorylation sites provides insights into evolution.</title>
        <authorList>
            <person name="Holt L.J."/>
            <person name="Tuch B.B."/>
            <person name="Villen J."/>
            <person name="Johnson A.D."/>
            <person name="Gygi S.P."/>
            <person name="Morgan D.O."/>
        </authorList>
    </citation>
    <scope>PHOSPHORYLATION [LARGE SCALE ANALYSIS] AT SER-230</scope>
    <scope>IDENTIFICATION BY MASS SPECTROMETRY [LARGE SCALE ANALYSIS]</scope>
</reference>
<protein>
    <recommendedName>
        <fullName>Monopolin complex subunit LRS4</fullName>
    </recommendedName>
    <alternativeName>
        <fullName>Loss of rDNA silencing protein 4</fullName>
    </alternativeName>
</protein>
<proteinExistence type="evidence at protein level"/>
<dbReference type="EMBL" id="U33007">
    <property type="protein sequence ID" value="AAB64867.1"/>
    <property type="molecule type" value="Genomic_DNA"/>
</dbReference>
<dbReference type="EMBL" id="BK006938">
    <property type="protein sequence ID" value="DAA12276.1"/>
    <property type="molecule type" value="Genomic_DNA"/>
</dbReference>
<dbReference type="PIR" id="S69719">
    <property type="entry name" value="S69719"/>
</dbReference>
<dbReference type="RefSeq" id="NP_010727.1">
    <property type="nucleotide sequence ID" value="NM_001180747.1"/>
</dbReference>
<dbReference type="PDB" id="3N7N">
    <property type="method" value="X-ray"/>
    <property type="resolution" value="3.90 A"/>
    <property type="chains" value="E/F=1-102"/>
</dbReference>
<dbReference type="PDBsum" id="3N7N"/>
<dbReference type="SMR" id="Q04087"/>
<dbReference type="BioGRID" id="32495">
    <property type="interactions" value="457"/>
</dbReference>
<dbReference type="ComplexPortal" id="CPX-1681">
    <property type="entry name" value="Monopolin complex"/>
</dbReference>
<dbReference type="DIP" id="DIP-1416N"/>
<dbReference type="FunCoup" id="Q04087">
    <property type="interactions" value="242"/>
</dbReference>
<dbReference type="IntAct" id="Q04087">
    <property type="interactions" value="16"/>
</dbReference>
<dbReference type="MINT" id="Q04087"/>
<dbReference type="STRING" id="4932.YDR439W"/>
<dbReference type="CarbonylDB" id="Q04087"/>
<dbReference type="iPTMnet" id="Q04087"/>
<dbReference type="PaxDb" id="4932-YDR439W"/>
<dbReference type="PeptideAtlas" id="Q04087"/>
<dbReference type="EnsemblFungi" id="YDR439W_mRNA">
    <property type="protein sequence ID" value="YDR439W"/>
    <property type="gene ID" value="YDR439W"/>
</dbReference>
<dbReference type="GeneID" id="852049"/>
<dbReference type="KEGG" id="sce:YDR439W"/>
<dbReference type="AGR" id="SGD:S000002847"/>
<dbReference type="SGD" id="S000002847">
    <property type="gene designation" value="LRS4"/>
</dbReference>
<dbReference type="VEuPathDB" id="FungiDB:YDR439W"/>
<dbReference type="HOGENOM" id="CLU_799749_0_0_1"/>
<dbReference type="InParanoid" id="Q04087"/>
<dbReference type="OMA" id="YESVIEC"/>
<dbReference type="OrthoDB" id="4058956at2759"/>
<dbReference type="BioCyc" id="YEAST:G3O-29973-MONOMER"/>
<dbReference type="BioGRID-ORCS" id="852049">
    <property type="hits" value="0 hits in 10 CRISPR screens"/>
</dbReference>
<dbReference type="PRO" id="PR:Q04087"/>
<dbReference type="Proteomes" id="UP000002311">
    <property type="component" value="Chromosome IV"/>
</dbReference>
<dbReference type="RNAct" id="Q04087">
    <property type="molecule type" value="protein"/>
</dbReference>
<dbReference type="GO" id="GO:0033551">
    <property type="term" value="C:monopolin complex"/>
    <property type="evidence" value="ECO:0000314"/>
    <property type="project" value="SGD"/>
</dbReference>
<dbReference type="GO" id="GO:0005730">
    <property type="term" value="C:nucleolus"/>
    <property type="evidence" value="ECO:0000314"/>
    <property type="project" value="SGD"/>
</dbReference>
<dbReference type="GO" id="GO:0005634">
    <property type="term" value="C:nucleus"/>
    <property type="evidence" value="ECO:0000314"/>
    <property type="project" value="SGD"/>
</dbReference>
<dbReference type="GO" id="GO:0045143">
    <property type="term" value="P:homologous chromosome segregation"/>
    <property type="evidence" value="ECO:0000315"/>
    <property type="project" value="SGD"/>
</dbReference>
<dbReference type="GO" id="GO:0045132">
    <property type="term" value="P:meiotic chromosome segregation"/>
    <property type="evidence" value="ECO:0000303"/>
    <property type="project" value="ComplexPortal"/>
</dbReference>
<dbReference type="GO" id="GO:0034503">
    <property type="term" value="P:protein localization to nucleolar rDNA repeats"/>
    <property type="evidence" value="ECO:0000315"/>
    <property type="project" value="SGD"/>
</dbReference>
<dbReference type="GO" id="GO:0070550">
    <property type="term" value="P:rDNA chromatin condensation"/>
    <property type="evidence" value="ECO:0000315"/>
    <property type="project" value="SGD"/>
</dbReference>
<dbReference type="GO" id="GO:0000183">
    <property type="term" value="P:rDNA heterochromatin formation"/>
    <property type="evidence" value="ECO:0000314"/>
    <property type="project" value="SGD"/>
</dbReference>
<dbReference type="GO" id="GO:1990414">
    <property type="term" value="P:replication-born double-strand break repair via sister chromatid exchange"/>
    <property type="evidence" value="ECO:0000315"/>
    <property type="project" value="SGD"/>
</dbReference>
<dbReference type="GO" id="GO:0051455">
    <property type="term" value="P:spindle attachment to meiosis I kinetochore"/>
    <property type="evidence" value="ECO:0000316"/>
    <property type="project" value="SGD"/>
</dbReference>
<dbReference type="InterPro" id="IPR018479">
    <property type="entry name" value="Lrs4/Mde4"/>
</dbReference>
<dbReference type="Pfam" id="PF10422">
    <property type="entry name" value="LRS4"/>
    <property type="match status" value="1"/>
</dbReference>
<name>LRS4_YEAST</name>
<organism>
    <name type="scientific">Saccharomyces cerevisiae (strain ATCC 204508 / S288c)</name>
    <name type="common">Baker's yeast</name>
    <dbReference type="NCBI Taxonomy" id="559292"/>
    <lineage>
        <taxon>Eukaryota</taxon>
        <taxon>Fungi</taxon>
        <taxon>Dikarya</taxon>
        <taxon>Ascomycota</taxon>
        <taxon>Saccharomycotina</taxon>
        <taxon>Saccharomycetes</taxon>
        <taxon>Saccharomycetales</taxon>
        <taxon>Saccharomycetaceae</taxon>
        <taxon>Saccharomyces</taxon>
    </lineage>
</organism>
<keyword id="KW-0002">3D-structure</keyword>
<keyword id="KW-0131">Cell cycle</keyword>
<keyword id="KW-0137">Centromere</keyword>
<keyword id="KW-0158">Chromosome</keyword>
<keyword id="KW-0175">Coiled coil</keyword>
<keyword id="KW-0469">Meiosis</keyword>
<keyword id="KW-0539">Nucleus</keyword>
<keyword id="KW-0597">Phosphoprotein</keyword>
<keyword id="KW-1185">Reference proteome</keyword>
<sequence length="347" mass="39354">MTTLLQLLSNYYKAKLDSERIYNEYVQSQYEFASLDKLNNNKGDPKKVVDETLFLQRQIAQLNKQLQLSFQENEKLLSVQKNQKALYQSKLSSKDAFIDDLKLKLKVEQISVDKHNKERTPSTGRDEQQRNSKAAHTSKPTIHLLSPIVNRDKPNNQTNDRGGNDPDSPTSQRRSRGLRSLLSSGKNTIFDSISKNLDDEINENAHIRNDTTSSKIAGKSPSRLSALQKSPELRKERNNMILKEHILRSKDDQNITSSRKLDNIELSSIGDSTAMTSRSSTVNANDILGNEENDGITKLKRVNKLTSSPVKRDCSTNKKRKLTKQRIATLPNSDEELSNNLNVDEFV</sequence>
<feature type="chain" id="PRO_0000257808" description="Monopolin complex subunit LRS4">
    <location>
        <begin position="1"/>
        <end position="347"/>
    </location>
</feature>
<feature type="region of interest" description="Disordered" evidence="2">
    <location>
        <begin position="112"/>
        <end position="183"/>
    </location>
</feature>
<feature type="region of interest" description="Disordered" evidence="2">
    <location>
        <begin position="208"/>
        <end position="230"/>
    </location>
</feature>
<feature type="coiled-coil region" evidence="1">
    <location>
        <begin position="46"/>
        <end position="118"/>
    </location>
</feature>
<feature type="compositionally biased region" description="Basic and acidic residues" evidence="2">
    <location>
        <begin position="112"/>
        <end position="130"/>
    </location>
</feature>
<feature type="compositionally biased region" description="Polar residues" evidence="2">
    <location>
        <begin position="131"/>
        <end position="140"/>
    </location>
</feature>
<feature type="compositionally biased region" description="Polar residues" evidence="2">
    <location>
        <begin position="155"/>
        <end position="172"/>
    </location>
</feature>
<feature type="modified residue" description="Phosphoserine" evidence="8">
    <location>
        <position position="168"/>
    </location>
</feature>
<feature type="modified residue" description="Phosphoserine" evidence="9">
    <location>
        <position position="230"/>
    </location>
</feature>